<proteinExistence type="inferred from homology"/>
<feature type="chain" id="PRO_1000212036" description="Glyceraldehyde-3-phosphate dehydrogenase">
    <location>
        <begin position="1"/>
        <end position="340"/>
    </location>
</feature>
<feature type="active site" description="Nucleophile" evidence="1">
    <location>
        <position position="139"/>
    </location>
</feature>
<feature type="binding site" evidence="1">
    <location>
        <begin position="11"/>
        <end position="12"/>
    </location>
    <ligand>
        <name>NAD(+)</name>
        <dbReference type="ChEBI" id="CHEBI:57540"/>
    </ligand>
</feature>
<feature type="binding site" evidence="1">
    <location>
        <position position="109"/>
    </location>
    <ligand>
        <name>NAD(+)</name>
        <dbReference type="ChEBI" id="CHEBI:57540"/>
    </ligand>
</feature>
<feature type="binding site" evidence="1">
    <location>
        <begin position="138"/>
        <end position="140"/>
    </location>
    <ligand>
        <name>D-glyceraldehyde 3-phosphate</name>
        <dbReference type="ChEBI" id="CHEBI:59776"/>
    </ligand>
</feature>
<feature type="binding site" evidence="1">
    <location>
        <position position="167"/>
    </location>
    <ligand>
        <name>NAD(+)</name>
        <dbReference type="ChEBI" id="CHEBI:57540"/>
    </ligand>
</feature>
<feature type="binding site" evidence="1">
    <location>
        <begin position="193"/>
        <end position="194"/>
    </location>
    <ligand>
        <name>D-glyceraldehyde 3-phosphate</name>
        <dbReference type="ChEBI" id="CHEBI:59776"/>
    </ligand>
</feature>
<feature type="binding site" evidence="1">
    <location>
        <position position="300"/>
    </location>
    <ligand>
        <name>NAD(+)</name>
        <dbReference type="ChEBI" id="CHEBI:57540"/>
    </ligand>
</feature>
<organism>
    <name type="scientific">Saccharolobus islandicus (strain M.16.4 / Kamchatka #3)</name>
    <name type="common">Sulfolobus islandicus</name>
    <dbReference type="NCBI Taxonomy" id="426118"/>
    <lineage>
        <taxon>Archaea</taxon>
        <taxon>Thermoproteota</taxon>
        <taxon>Thermoprotei</taxon>
        <taxon>Sulfolobales</taxon>
        <taxon>Sulfolobaceae</taxon>
        <taxon>Saccharolobus</taxon>
    </lineage>
</organism>
<sequence>MISVAVNGYGTIGKRVADAILKQPDMRLVGVAKTSPNYEAFIAHRKGIKIYVPQQSIKKFEESGIPVAGTIEDLVKASDIVVDTTPNGVGAQYKPIYQQFQRNAIFQGGEKAEVADISFSALCNYDEALGKKYIRVVSCNTTALLRTICTINKVTKVEKVRATIVRRAADQKEVKKGPINSLVPDPATVPSHHAKDVNSVIKNLDIVTMAVIAPTTLMHMHFINITLKDKVEKKDVLSVLENTPRIVLISSKYDAEATAELVEVARDLKRERNDIPEVMVFDDSVYVKDNEVMLMYAVHQESIVVPENVDAIRASTRLMSAEDSIRITNESLGILKGYLI</sequence>
<dbReference type="EC" id="1.2.1.59" evidence="1"/>
<dbReference type="EMBL" id="CP001402">
    <property type="protein sequence ID" value="ACR42179.1"/>
    <property type="molecule type" value="Genomic_DNA"/>
</dbReference>
<dbReference type="RefSeq" id="WP_012716227.1">
    <property type="nucleotide sequence ID" value="NC_012726.1"/>
</dbReference>
<dbReference type="SMR" id="C4KHW5"/>
<dbReference type="KEGG" id="sid:M164_1578"/>
<dbReference type="HOGENOM" id="CLU_069533_0_0_2"/>
<dbReference type="UniPathway" id="UPA00109">
    <property type="reaction ID" value="UER00184"/>
</dbReference>
<dbReference type="Proteomes" id="UP000001479">
    <property type="component" value="Chromosome"/>
</dbReference>
<dbReference type="GO" id="GO:0005737">
    <property type="term" value="C:cytoplasm"/>
    <property type="evidence" value="ECO:0007669"/>
    <property type="project" value="UniProtKB-SubCell"/>
</dbReference>
<dbReference type="GO" id="GO:0008839">
    <property type="term" value="F:4-hydroxy-tetrahydrodipicolinate reductase"/>
    <property type="evidence" value="ECO:0007669"/>
    <property type="project" value="InterPro"/>
</dbReference>
<dbReference type="GO" id="GO:0004365">
    <property type="term" value="F:glyceraldehyde-3-phosphate dehydrogenase (NAD+) (phosphorylating) activity"/>
    <property type="evidence" value="ECO:0007669"/>
    <property type="project" value="UniProtKB-UniRule"/>
</dbReference>
<dbReference type="GO" id="GO:0047100">
    <property type="term" value="F:glyceraldehyde-3-phosphate dehydrogenase (NADP+) (phosphorylating) activity"/>
    <property type="evidence" value="ECO:0007669"/>
    <property type="project" value="RHEA"/>
</dbReference>
<dbReference type="GO" id="GO:0051287">
    <property type="term" value="F:NAD binding"/>
    <property type="evidence" value="ECO:0007669"/>
    <property type="project" value="InterPro"/>
</dbReference>
<dbReference type="GO" id="GO:0050661">
    <property type="term" value="F:NADP binding"/>
    <property type="evidence" value="ECO:0007669"/>
    <property type="project" value="InterPro"/>
</dbReference>
<dbReference type="GO" id="GO:0006096">
    <property type="term" value="P:glycolytic process"/>
    <property type="evidence" value="ECO:0007669"/>
    <property type="project" value="UniProtKB-UniRule"/>
</dbReference>
<dbReference type="GO" id="GO:0009089">
    <property type="term" value="P:lysine biosynthetic process via diaminopimelate"/>
    <property type="evidence" value="ECO:0007669"/>
    <property type="project" value="InterPro"/>
</dbReference>
<dbReference type="CDD" id="cd18127">
    <property type="entry name" value="GAPDH_II_C"/>
    <property type="match status" value="1"/>
</dbReference>
<dbReference type="CDD" id="cd02278">
    <property type="entry name" value="GAPDH_II_N"/>
    <property type="match status" value="1"/>
</dbReference>
<dbReference type="Gene3D" id="3.30.360.10">
    <property type="entry name" value="Dihydrodipicolinate Reductase, domain 2"/>
    <property type="match status" value="1"/>
</dbReference>
<dbReference type="Gene3D" id="3.40.50.720">
    <property type="entry name" value="NAD(P)-binding Rossmann-like Domain"/>
    <property type="match status" value="1"/>
</dbReference>
<dbReference type="HAMAP" id="MF_00559">
    <property type="entry name" value="G3P_dehdrog_arch"/>
    <property type="match status" value="1"/>
</dbReference>
<dbReference type="InterPro" id="IPR000846">
    <property type="entry name" value="DapB_N"/>
</dbReference>
<dbReference type="InterPro" id="IPR020831">
    <property type="entry name" value="GlycerAld/Erythrose_P_DH"/>
</dbReference>
<dbReference type="InterPro" id="IPR020830">
    <property type="entry name" value="GlycerAld_3-P_DH_AS"/>
</dbReference>
<dbReference type="InterPro" id="IPR020829">
    <property type="entry name" value="GlycerAld_3-P_DH_cat"/>
</dbReference>
<dbReference type="InterPro" id="IPR020828">
    <property type="entry name" value="GlycerAld_3-P_DH_NAD(P)-bd"/>
</dbReference>
<dbReference type="InterPro" id="IPR006436">
    <property type="entry name" value="Glyceraldehyde-3-P_DH_2_arc"/>
</dbReference>
<dbReference type="InterPro" id="IPR036291">
    <property type="entry name" value="NAD(P)-bd_dom_sf"/>
</dbReference>
<dbReference type="NCBIfam" id="TIGR01546">
    <property type="entry name" value="GAPDH-II_archae"/>
    <property type="match status" value="1"/>
</dbReference>
<dbReference type="NCBIfam" id="NF003251">
    <property type="entry name" value="PRK04207.1"/>
    <property type="match status" value="1"/>
</dbReference>
<dbReference type="Pfam" id="PF01113">
    <property type="entry name" value="DapB_N"/>
    <property type="match status" value="1"/>
</dbReference>
<dbReference type="Pfam" id="PF02800">
    <property type="entry name" value="Gp_dh_C"/>
    <property type="match status" value="1"/>
</dbReference>
<dbReference type="PIRSF" id="PIRSF000149">
    <property type="entry name" value="GAP_DH"/>
    <property type="match status" value="1"/>
</dbReference>
<dbReference type="SMART" id="SM00846">
    <property type="entry name" value="Gp_dh_N"/>
    <property type="match status" value="1"/>
</dbReference>
<dbReference type="SUPFAM" id="SSF55347">
    <property type="entry name" value="Glyceraldehyde-3-phosphate dehydrogenase-like, C-terminal domain"/>
    <property type="match status" value="1"/>
</dbReference>
<dbReference type="SUPFAM" id="SSF51735">
    <property type="entry name" value="NAD(P)-binding Rossmann-fold domains"/>
    <property type="match status" value="1"/>
</dbReference>
<dbReference type="PROSITE" id="PS00071">
    <property type="entry name" value="GAPDH"/>
    <property type="match status" value="1"/>
</dbReference>
<gene>
    <name evidence="1" type="primary">gap</name>
    <name type="ordered locus">M164_1578</name>
</gene>
<name>G3P_SACI6</name>
<accession>C4KHW5</accession>
<comment type="catalytic activity">
    <reaction evidence="1">
        <text>D-glyceraldehyde 3-phosphate + phosphate + NADP(+) = (2R)-3-phospho-glyceroyl phosphate + NADPH + H(+)</text>
        <dbReference type="Rhea" id="RHEA:10296"/>
        <dbReference type="ChEBI" id="CHEBI:15378"/>
        <dbReference type="ChEBI" id="CHEBI:43474"/>
        <dbReference type="ChEBI" id="CHEBI:57604"/>
        <dbReference type="ChEBI" id="CHEBI:57783"/>
        <dbReference type="ChEBI" id="CHEBI:58349"/>
        <dbReference type="ChEBI" id="CHEBI:59776"/>
        <dbReference type="EC" id="1.2.1.59"/>
    </reaction>
</comment>
<comment type="catalytic activity">
    <reaction evidence="1">
        <text>D-glyceraldehyde 3-phosphate + phosphate + NAD(+) = (2R)-3-phospho-glyceroyl phosphate + NADH + H(+)</text>
        <dbReference type="Rhea" id="RHEA:10300"/>
        <dbReference type="ChEBI" id="CHEBI:15378"/>
        <dbReference type="ChEBI" id="CHEBI:43474"/>
        <dbReference type="ChEBI" id="CHEBI:57540"/>
        <dbReference type="ChEBI" id="CHEBI:57604"/>
        <dbReference type="ChEBI" id="CHEBI:57945"/>
        <dbReference type="ChEBI" id="CHEBI:59776"/>
        <dbReference type="EC" id="1.2.1.59"/>
    </reaction>
</comment>
<comment type="pathway">
    <text evidence="1">Carbohydrate degradation; glycolysis; pyruvate from D-glyceraldehyde 3-phosphate: step 1/5.</text>
</comment>
<comment type="subunit">
    <text evidence="1">Homotetramer.</text>
</comment>
<comment type="subcellular location">
    <subcellularLocation>
        <location evidence="1">Cytoplasm</location>
    </subcellularLocation>
</comment>
<comment type="similarity">
    <text evidence="1">Belongs to the glyceraldehyde-3-phosphate dehydrogenase family.</text>
</comment>
<protein>
    <recommendedName>
        <fullName evidence="1">Glyceraldehyde-3-phosphate dehydrogenase</fullName>
        <shortName evidence="1">GAPDH</shortName>
        <ecNumber evidence="1">1.2.1.59</ecNumber>
    </recommendedName>
    <alternativeName>
        <fullName evidence="1">NAD(P)-dependent glyceraldehyde-3-phosphate dehydrogenase</fullName>
    </alternativeName>
</protein>
<reference key="1">
    <citation type="journal article" date="2009" name="Proc. Natl. Acad. Sci. U.S.A.">
        <title>Biogeography of the Sulfolobus islandicus pan-genome.</title>
        <authorList>
            <person name="Reno M.L."/>
            <person name="Held N.L."/>
            <person name="Fields C.J."/>
            <person name="Burke P.V."/>
            <person name="Whitaker R.J."/>
        </authorList>
    </citation>
    <scope>NUCLEOTIDE SEQUENCE [LARGE SCALE GENOMIC DNA]</scope>
    <source>
        <strain>M.16.4 / Kamchatka #3</strain>
    </source>
</reference>
<keyword id="KW-0963">Cytoplasm</keyword>
<keyword id="KW-0324">Glycolysis</keyword>
<keyword id="KW-0520">NAD</keyword>
<keyword id="KW-0521">NADP</keyword>
<keyword id="KW-0560">Oxidoreductase</keyword>
<evidence type="ECO:0000255" key="1">
    <source>
        <dbReference type="HAMAP-Rule" id="MF_00559"/>
    </source>
</evidence>